<accession>B7HNT8</accession>
<reference key="1">
    <citation type="submission" date="2008-10" db="EMBL/GenBank/DDBJ databases">
        <title>Genome sequence of Bacillus cereus AH187.</title>
        <authorList>
            <person name="Dodson R.J."/>
            <person name="Durkin A.S."/>
            <person name="Rosovitz M.J."/>
            <person name="Rasko D.A."/>
            <person name="Kolsto A.B."/>
            <person name="Okstad O.A."/>
            <person name="Ravel J."/>
            <person name="Sutton G."/>
        </authorList>
    </citation>
    <scope>NUCLEOTIDE SEQUENCE [LARGE SCALE GENOMIC DNA]</scope>
    <source>
        <strain>AH187</strain>
    </source>
</reference>
<dbReference type="EMBL" id="CP001177">
    <property type="protein sequence ID" value="ACJ78429.1"/>
    <property type="molecule type" value="Genomic_DNA"/>
</dbReference>
<dbReference type="SMR" id="B7HNT8"/>
<dbReference type="KEGG" id="bcr:BCAH187_A4305"/>
<dbReference type="HOGENOM" id="CLU_097103_3_0_9"/>
<dbReference type="UniPathway" id="UPA00068"/>
<dbReference type="Proteomes" id="UP000002214">
    <property type="component" value="Chromosome"/>
</dbReference>
<dbReference type="GO" id="GO:0005737">
    <property type="term" value="C:cytoplasm"/>
    <property type="evidence" value="ECO:0007669"/>
    <property type="project" value="UniProtKB-SubCell"/>
</dbReference>
<dbReference type="GO" id="GO:0034618">
    <property type="term" value="F:arginine binding"/>
    <property type="evidence" value="ECO:0007669"/>
    <property type="project" value="InterPro"/>
</dbReference>
<dbReference type="GO" id="GO:0003677">
    <property type="term" value="F:DNA binding"/>
    <property type="evidence" value="ECO:0007669"/>
    <property type="project" value="UniProtKB-KW"/>
</dbReference>
<dbReference type="GO" id="GO:0003700">
    <property type="term" value="F:DNA-binding transcription factor activity"/>
    <property type="evidence" value="ECO:0007669"/>
    <property type="project" value="UniProtKB-UniRule"/>
</dbReference>
<dbReference type="GO" id="GO:0006526">
    <property type="term" value="P:L-arginine biosynthetic process"/>
    <property type="evidence" value="ECO:0007669"/>
    <property type="project" value="UniProtKB-UniPathway"/>
</dbReference>
<dbReference type="GO" id="GO:0051259">
    <property type="term" value="P:protein complex oligomerization"/>
    <property type="evidence" value="ECO:0007669"/>
    <property type="project" value="InterPro"/>
</dbReference>
<dbReference type="GO" id="GO:1900079">
    <property type="term" value="P:regulation of arginine biosynthetic process"/>
    <property type="evidence" value="ECO:0007669"/>
    <property type="project" value="UniProtKB-UniRule"/>
</dbReference>
<dbReference type="FunFam" id="1.10.10.10:FF:000172">
    <property type="entry name" value="Arginine repressor"/>
    <property type="match status" value="1"/>
</dbReference>
<dbReference type="FunFam" id="3.30.1360.40:FF:000006">
    <property type="entry name" value="Arginine repressor"/>
    <property type="match status" value="1"/>
</dbReference>
<dbReference type="Gene3D" id="3.30.1360.40">
    <property type="match status" value="1"/>
</dbReference>
<dbReference type="Gene3D" id="1.10.10.10">
    <property type="entry name" value="Winged helix-like DNA-binding domain superfamily/Winged helix DNA-binding domain"/>
    <property type="match status" value="1"/>
</dbReference>
<dbReference type="HAMAP" id="MF_00173">
    <property type="entry name" value="Arg_repressor"/>
    <property type="match status" value="1"/>
</dbReference>
<dbReference type="InterPro" id="IPR001669">
    <property type="entry name" value="Arg_repress"/>
</dbReference>
<dbReference type="InterPro" id="IPR020899">
    <property type="entry name" value="Arg_repress_C"/>
</dbReference>
<dbReference type="InterPro" id="IPR036251">
    <property type="entry name" value="Arg_repress_C_sf"/>
</dbReference>
<dbReference type="InterPro" id="IPR020900">
    <property type="entry name" value="Arg_repress_DNA-bd"/>
</dbReference>
<dbReference type="InterPro" id="IPR036388">
    <property type="entry name" value="WH-like_DNA-bd_sf"/>
</dbReference>
<dbReference type="InterPro" id="IPR036390">
    <property type="entry name" value="WH_DNA-bd_sf"/>
</dbReference>
<dbReference type="NCBIfam" id="TIGR01529">
    <property type="entry name" value="argR_whole"/>
    <property type="match status" value="1"/>
</dbReference>
<dbReference type="NCBIfam" id="NF003281">
    <property type="entry name" value="PRK04280.1"/>
    <property type="match status" value="1"/>
</dbReference>
<dbReference type="PANTHER" id="PTHR34471">
    <property type="entry name" value="ARGININE REPRESSOR"/>
    <property type="match status" value="1"/>
</dbReference>
<dbReference type="PANTHER" id="PTHR34471:SF1">
    <property type="entry name" value="ARGININE REPRESSOR"/>
    <property type="match status" value="1"/>
</dbReference>
<dbReference type="Pfam" id="PF01316">
    <property type="entry name" value="Arg_repressor"/>
    <property type="match status" value="1"/>
</dbReference>
<dbReference type="Pfam" id="PF02863">
    <property type="entry name" value="Arg_repressor_C"/>
    <property type="match status" value="1"/>
</dbReference>
<dbReference type="PRINTS" id="PR01467">
    <property type="entry name" value="ARGREPRESSOR"/>
</dbReference>
<dbReference type="SUPFAM" id="SSF55252">
    <property type="entry name" value="C-terminal domain of arginine repressor"/>
    <property type="match status" value="1"/>
</dbReference>
<dbReference type="SUPFAM" id="SSF46785">
    <property type="entry name" value="Winged helix' DNA-binding domain"/>
    <property type="match status" value="1"/>
</dbReference>
<feature type="chain" id="PRO_1000189555" description="Arginine repressor">
    <location>
        <begin position="1"/>
        <end position="149"/>
    </location>
</feature>
<name>ARGR_BACC7</name>
<organism>
    <name type="scientific">Bacillus cereus (strain AH187)</name>
    <dbReference type="NCBI Taxonomy" id="405534"/>
    <lineage>
        <taxon>Bacteria</taxon>
        <taxon>Bacillati</taxon>
        <taxon>Bacillota</taxon>
        <taxon>Bacilli</taxon>
        <taxon>Bacillales</taxon>
        <taxon>Bacillaceae</taxon>
        <taxon>Bacillus</taxon>
        <taxon>Bacillus cereus group</taxon>
    </lineage>
</organism>
<keyword id="KW-0028">Amino-acid biosynthesis</keyword>
<keyword id="KW-0055">Arginine biosynthesis</keyword>
<keyword id="KW-0963">Cytoplasm</keyword>
<keyword id="KW-0238">DNA-binding</keyword>
<keyword id="KW-0678">Repressor</keyword>
<keyword id="KW-0804">Transcription</keyword>
<keyword id="KW-0805">Transcription regulation</keyword>
<protein>
    <recommendedName>
        <fullName evidence="1">Arginine repressor</fullName>
    </recommendedName>
</protein>
<gene>
    <name evidence="1" type="primary">argR</name>
    <name type="ordered locus">BCAH187_A4305</name>
</gene>
<evidence type="ECO:0000255" key="1">
    <source>
        <dbReference type="HAMAP-Rule" id="MF_00173"/>
    </source>
</evidence>
<sequence>MNKGQRHIKIREIIANKEIETQDELVDILRNEGFNVTQATVSRDIKELHLVKVPLHDGRYKYSLPADQRFNPLQKLKRNLVDSFVKLDTAGHMLVLKTLPGNAHSLGALIDHLEWDEIIGTICGDDTCLIICRTPEDTGVVSDRFLNML</sequence>
<proteinExistence type="inferred from homology"/>
<comment type="function">
    <text evidence="1">Regulates arginine biosynthesis genes.</text>
</comment>
<comment type="pathway">
    <text>Amino-acid biosynthesis; L-arginine biosynthesis [regulation].</text>
</comment>
<comment type="subcellular location">
    <subcellularLocation>
        <location evidence="1">Cytoplasm</location>
    </subcellularLocation>
</comment>
<comment type="similarity">
    <text evidence="1">Belongs to the ArgR family.</text>
</comment>